<gene>
    <name evidence="1" type="primary">syd</name>
    <name type="ordered locus">Shal_2998</name>
</gene>
<dbReference type="EMBL" id="CP000931">
    <property type="protein sequence ID" value="ABZ77547.1"/>
    <property type="molecule type" value="Genomic_DNA"/>
</dbReference>
<dbReference type="RefSeq" id="WP_012278073.1">
    <property type="nucleotide sequence ID" value="NC_010334.1"/>
</dbReference>
<dbReference type="SMR" id="B0TPA0"/>
<dbReference type="STRING" id="458817.Shal_2998"/>
<dbReference type="KEGG" id="shl:Shal_2998"/>
<dbReference type="eggNOG" id="ENOG502ZCMR">
    <property type="taxonomic scope" value="Bacteria"/>
</dbReference>
<dbReference type="HOGENOM" id="CLU_121866_0_0_6"/>
<dbReference type="OrthoDB" id="5599437at2"/>
<dbReference type="Proteomes" id="UP000001317">
    <property type="component" value="Chromosome"/>
</dbReference>
<dbReference type="GO" id="GO:0009898">
    <property type="term" value="C:cytoplasmic side of plasma membrane"/>
    <property type="evidence" value="ECO:0007669"/>
    <property type="project" value="InterPro"/>
</dbReference>
<dbReference type="CDD" id="cd16323">
    <property type="entry name" value="Syd"/>
    <property type="match status" value="1"/>
</dbReference>
<dbReference type="Gene3D" id="3.40.1580.20">
    <property type="entry name" value="Syd protein"/>
    <property type="match status" value="1"/>
</dbReference>
<dbReference type="HAMAP" id="MF_01104">
    <property type="entry name" value="Syd"/>
    <property type="match status" value="1"/>
</dbReference>
<dbReference type="InterPro" id="IPR009948">
    <property type="entry name" value="Syd"/>
</dbReference>
<dbReference type="InterPro" id="IPR038228">
    <property type="entry name" value="Syd_sf"/>
</dbReference>
<dbReference type="NCBIfam" id="NF003439">
    <property type="entry name" value="PRK04968.1"/>
    <property type="match status" value="1"/>
</dbReference>
<dbReference type="Pfam" id="PF07348">
    <property type="entry name" value="Syd"/>
    <property type="match status" value="1"/>
</dbReference>
<comment type="function">
    <text evidence="1">Interacts with the SecY protein in vivo. May bind preferentially to an uncomplexed state of SecY, thus functioning either as a chelating agent for excess SecY in the cell or as a regulatory factor that negatively controls the translocase function.</text>
</comment>
<comment type="subcellular location">
    <subcellularLocation>
        <location evidence="1">Cell inner membrane</location>
        <topology evidence="1">Peripheral membrane protein</topology>
        <orientation evidence="1">Cytoplasmic side</orientation>
    </subcellularLocation>
    <text evidence="1">Loosely associated with the cytoplasmic side of the inner membrane, probably via SecY.</text>
</comment>
<comment type="similarity">
    <text evidence="1">Belongs to the Syd family.</text>
</comment>
<organism>
    <name type="scientific">Shewanella halifaxensis (strain HAW-EB4)</name>
    <dbReference type="NCBI Taxonomy" id="458817"/>
    <lineage>
        <taxon>Bacteria</taxon>
        <taxon>Pseudomonadati</taxon>
        <taxon>Pseudomonadota</taxon>
        <taxon>Gammaproteobacteria</taxon>
        <taxon>Alteromonadales</taxon>
        <taxon>Shewanellaceae</taxon>
        <taxon>Shewanella</taxon>
    </lineage>
</organism>
<accession>B0TPA0</accession>
<keyword id="KW-0997">Cell inner membrane</keyword>
<keyword id="KW-1003">Cell membrane</keyword>
<keyword id="KW-0472">Membrane</keyword>
<reference key="1">
    <citation type="submission" date="2008-01" db="EMBL/GenBank/DDBJ databases">
        <title>Complete sequence of Shewanella halifaxensis HAW-EB4.</title>
        <authorList>
            <consortium name="US DOE Joint Genome Institute"/>
            <person name="Copeland A."/>
            <person name="Lucas S."/>
            <person name="Lapidus A."/>
            <person name="Glavina del Rio T."/>
            <person name="Dalin E."/>
            <person name="Tice H."/>
            <person name="Bruce D."/>
            <person name="Goodwin L."/>
            <person name="Pitluck S."/>
            <person name="Sims D."/>
            <person name="Brettin T."/>
            <person name="Detter J.C."/>
            <person name="Han C."/>
            <person name="Kuske C.R."/>
            <person name="Schmutz J."/>
            <person name="Larimer F."/>
            <person name="Land M."/>
            <person name="Hauser L."/>
            <person name="Kyrpides N."/>
            <person name="Kim E."/>
            <person name="Zhao J.-S."/>
            <person name="Richardson P."/>
        </authorList>
    </citation>
    <scope>NUCLEOTIDE SEQUENCE [LARGE SCALE GENOMIC DNA]</scope>
    <source>
        <strain>HAW-EB4</strain>
    </source>
</reference>
<name>SYDP_SHEHH</name>
<protein>
    <recommendedName>
        <fullName evidence="1">Protein Syd</fullName>
    </recommendedName>
</protein>
<feature type="chain" id="PRO_1000084805" description="Protein Syd">
    <location>
        <begin position="1"/>
        <end position="213"/>
    </location>
</feature>
<proteinExistence type="inferred from homology"/>
<evidence type="ECO:0000255" key="1">
    <source>
        <dbReference type="HAMAP-Rule" id="MF_01104"/>
    </source>
</evidence>
<sequence length="213" mass="24542">MSSLPALDLFLSKYQQAYVEKLDEQPRYYAQEQESDCVVGEMDSDGAVFWQAVVRQTPGQFDNVETALELTLCAEINAFYGRHFSAPLFFDSKWGSGELIQVWNQTDFEYLQQNIIGHLMMKKKLKQEPTWFIGVLDDEDKMLTVNNSDGSVWVEIPGEVQSSKLAESLNEFISLLTPRVTPPVKLIEESMPELDHPGIWQRMKLMWRNLRGK</sequence>